<sequence>MSHDANTIDSRTHEGELNKLGFWIFLTAEFALFGTLFATLLTLQHGGGYGGKLTTDLFELHLILIMTFALLISSYTCGIAIYYMRQEKQNLMMFWMIITVILGLVFVGFEIYEFAHYASEGVNPTIGSFWSSFFILLGTHGAHVSLGIVWVICLLIQIGTRGLDSYNAPKLFIVSLYWHFLDVVWVFIFTAVYMIGMVYSG</sequence>
<protein>
    <recommendedName>
        <fullName>Probable quinol oxidase subunit 3</fullName>
        <ecNumber>1.10.3.-</ecNumber>
    </recommendedName>
    <alternativeName>
        <fullName>Quinol oxidase polypeptide III</fullName>
    </alternativeName>
</protein>
<proteinExistence type="inferred from homology"/>
<reference key="1">
    <citation type="journal article" date="2005" name="J. Bacteriol.">
        <title>Insights on evolution of virulence and resistance from the complete genome analysis of an early methicillin-resistant Staphylococcus aureus strain and a biofilm-producing methicillin-resistant Staphylococcus epidermidis strain.</title>
        <authorList>
            <person name="Gill S.R."/>
            <person name="Fouts D.E."/>
            <person name="Archer G.L."/>
            <person name="Mongodin E.F."/>
            <person name="DeBoy R.T."/>
            <person name="Ravel J."/>
            <person name="Paulsen I.T."/>
            <person name="Kolonay J.F."/>
            <person name="Brinkac L.M."/>
            <person name="Beanan M.J."/>
            <person name="Dodson R.J."/>
            <person name="Daugherty S.C."/>
            <person name="Madupu R."/>
            <person name="Angiuoli S.V."/>
            <person name="Durkin A.S."/>
            <person name="Haft D.H."/>
            <person name="Vamathevan J.J."/>
            <person name="Khouri H."/>
            <person name="Utterback T.R."/>
            <person name="Lee C."/>
            <person name="Dimitrov G."/>
            <person name="Jiang L."/>
            <person name="Qin H."/>
            <person name="Weidman J."/>
            <person name="Tran K."/>
            <person name="Kang K.H."/>
            <person name="Hance I.R."/>
            <person name="Nelson K.E."/>
            <person name="Fraser C.M."/>
        </authorList>
    </citation>
    <scope>NUCLEOTIDE SEQUENCE [LARGE SCALE GENOMIC DNA]</scope>
    <source>
        <strain>ATCC 35984 / DSM 28319 / BCRC 17069 / CCUG 31568 / BM 3577 / RP62A</strain>
    </source>
</reference>
<organism>
    <name type="scientific">Staphylococcus epidermidis (strain ATCC 35984 / DSM 28319 / BCRC 17069 / CCUG 31568 / BM 3577 / RP62A)</name>
    <dbReference type="NCBI Taxonomy" id="176279"/>
    <lineage>
        <taxon>Bacteria</taxon>
        <taxon>Bacillati</taxon>
        <taxon>Bacillota</taxon>
        <taxon>Bacilli</taxon>
        <taxon>Bacillales</taxon>
        <taxon>Staphylococcaceae</taxon>
        <taxon>Staphylococcus</taxon>
    </lineage>
</organism>
<accession>Q5HQB1</accession>
<gene>
    <name type="primary">qoxC</name>
    <name type="ordered locus">SERP0644</name>
</gene>
<comment type="function">
    <text evidence="1">Catalyzes quinol oxidation with the concomitant reduction of oxygen to water.</text>
</comment>
<comment type="catalytic activity">
    <reaction>
        <text>2 a quinol + O2 = 2 a quinone + 2 H2O</text>
        <dbReference type="Rhea" id="RHEA:55376"/>
        <dbReference type="ChEBI" id="CHEBI:15377"/>
        <dbReference type="ChEBI" id="CHEBI:15379"/>
        <dbReference type="ChEBI" id="CHEBI:24646"/>
        <dbReference type="ChEBI" id="CHEBI:132124"/>
    </reaction>
</comment>
<comment type="subcellular location">
    <subcellularLocation>
        <location evidence="1">Cell membrane</location>
        <topology evidence="1">Multi-pass membrane protein</topology>
    </subcellularLocation>
</comment>
<comment type="similarity">
    <text evidence="3">Belongs to the cytochrome c oxidase subunit 3 family.</text>
</comment>
<dbReference type="EC" id="1.10.3.-"/>
<dbReference type="EMBL" id="CP000029">
    <property type="protein sequence ID" value="AAW53982.1"/>
    <property type="molecule type" value="Genomic_DNA"/>
</dbReference>
<dbReference type="RefSeq" id="WP_001831738.1">
    <property type="nucleotide sequence ID" value="NC_002976.3"/>
</dbReference>
<dbReference type="SMR" id="Q5HQB1"/>
<dbReference type="STRING" id="176279.SERP0644"/>
<dbReference type="GeneID" id="50019103"/>
<dbReference type="KEGG" id="ser:SERP0644"/>
<dbReference type="eggNOG" id="COG1845">
    <property type="taxonomic scope" value="Bacteria"/>
</dbReference>
<dbReference type="HOGENOM" id="CLU_044071_3_2_9"/>
<dbReference type="Proteomes" id="UP000000531">
    <property type="component" value="Chromosome"/>
</dbReference>
<dbReference type="GO" id="GO:0005886">
    <property type="term" value="C:plasma membrane"/>
    <property type="evidence" value="ECO:0007669"/>
    <property type="project" value="UniProtKB-SubCell"/>
</dbReference>
<dbReference type="GO" id="GO:0004129">
    <property type="term" value="F:cytochrome-c oxidase activity"/>
    <property type="evidence" value="ECO:0007669"/>
    <property type="project" value="InterPro"/>
</dbReference>
<dbReference type="GO" id="GO:0019646">
    <property type="term" value="P:aerobic electron transport chain"/>
    <property type="evidence" value="ECO:0007669"/>
    <property type="project" value="InterPro"/>
</dbReference>
<dbReference type="GO" id="GO:0042773">
    <property type="term" value="P:ATP synthesis coupled electron transport"/>
    <property type="evidence" value="ECO:0007669"/>
    <property type="project" value="InterPro"/>
</dbReference>
<dbReference type="CDD" id="cd02863">
    <property type="entry name" value="Ubiquinol_oxidase_III"/>
    <property type="match status" value="1"/>
</dbReference>
<dbReference type="FunFam" id="1.20.120.80:FF:000001">
    <property type="entry name" value="Cytochrome (Ubi)quinol oxidase subunit III"/>
    <property type="match status" value="1"/>
</dbReference>
<dbReference type="Gene3D" id="1.20.120.80">
    <property type="entry name" value="Cytochrome c oxidase, subunit III, four-helix bundle"/>
    <property type="match status" value="1"/>
</dbReference>
<dbReference type="InterPro" id="IPR024791">
    <property type="entry name" value="Cyt_c/ubiquinol_Oxase_su3"/>
</dbReference>
<dbReference type="InterPro" id="IPR000298">
    <property type="entry name" value="Cyt_c_oxidase-like_su3"/>
</dbReference>
<dbReference type="InterPro" id="IPR035973">
    <property type="entry name" value="Cyt_c_oxidase_su3-like_sf"/>
</dbReference>
<dbReference type="InterPro" id="IPR013833">
    <property type="entry name" value="Cyt_c_oxidase_su3_a-hlx"/>
</dbReference>
<dbReference type="InterPro" id="IPR014246">
    <property type="entry name" value="QoxC"/>
</dbReference>
<dbReference type="InterPro" id="IPR033946">
    <property type="entry name" value="Ubiquinol_oxase_su3_dom"/>
</dbReference>
<dbReference type="NCBIfam" id="TIGR02897">
    <property type="entry name" value="QoxC"/>
    <property type="match status" value="1"/>
</dbReference>
<dbReference type="PANTHER" id="PTHR11403:SF2">
    <property type="entry name" value="CYTOCHROME BO(3) UBIQUINOL OXIDASE SUBUNIT 3"/>
    <property type="match status" value="1"/>
</dbReference>
<dbReference type="PANTHER" id="PTHR11403">
    <property type="entry name" value="CYTOCHROME C OXIDASE SUBUNIT III"/>
    <property type="match status" value="1"/>
</dbReference>
<dbReference type="Pfam" id="PF00510">
    <property type="entry name" value="COX3"/>
    <property type="match status" value="1"/>
</dbReference>
<dbReference type="SUPFAM" id="SSF81452">
    <property type="entry name" value="Cytochrome c oxidase subunit III-like"/>
    <property type="match status" value="1"/>
</dbReference>
<dbReference type="PROSITE" id="PS50253">
    <property type="entry name" value="COX3"/>
    <property type="match status" value="1"/>
</dbReference>
<feature type="chain" id="PRO_0000275894" description="Probable quinol oxidase subunit 3">
    <location>
        <begin position="1"/>
        <end position="201"/>
    </location>
</feature>
<feature type="transmembrane region" description="Helical" evidence="2">
    <location>
        <begin position="20"/>
        <end position="40"/>
    </location>
</feature>
<feature type="transmembrane region" description="Helical" evidence="2">
    <location>
        <begin position="62"/>
        <end position="82"/>
    </location>
</feature>
<feature type="transmembrane region" description="Helical" evidence="2">
    <location>
        <begin position="91"/>
        <end position="111"/>
    </location>
</feature>
<feature type="transmembrane region" description="Helical" evidence="2">
    <location>
        <begin position="133"/>
        <end position="153"/>
    </location>
</feature>
<feature type="transmembrane region" description="Helical" evidence="2">
    <location>
        <begin position="172"/>
        <end position="192"/>
    </location>
</feature>
<keyword id="KW-1003">Cell membrane</keyword>
<keyword id="KW-0472">Membrane</keyword>
<keyword id="KW-0560">Oxidoreductase</keyword>
<keyword id="KW-1185">Reference proteome</keyword>
<keyword id="KW-0812">Transmembrane</keyword>
<keyword id="KW-1133">Transmembrane helix</keyword>
<name>QOX3_STAEQ</name>
<evidence type="ECO:0000250" key="1"/>
<evidence type="ECO:0000255" key="2"/>
<evidence type="ECO:0000305" key="3"/>